<sequence length="743" mass="81904">MKKHPLHMLGRLVAGKNTQWITLSVWILITLLLSFTLPQVNSTKEPNPKNLPETAMSQQAEALMKKEFPNNAGNPLLVVWYRDGGLQSQDYKLIQDVYKELKASPLKEQSTLPPFDTIPEQVLSKSASKDGTSFVTPVFFNKSAGTDILKENLDDLRNIVNSKVDEDPFKRKINDAGLHVRLSGPVGIQTDAVSLFSQADVKLLVATVLLVLVLLILLYRSPILAILPLLVVGFAYGIISPTLGFLADHGWIKVDAQAISIMTVLLFGAGTDYCLFLISRYREYLLEEESKYKALQLAIKASGGAIIMSALTVVLGLGTLLLAHYGAFHRFAVPFSVAVFIMGIAALTILPAFLLIFGRTAFFPFIPRTTSMNEELARRKKKVVKVKKSKGAFSKKLGDVVVRRPWTIIMLTVFVLGGLASFVPRIQYTYDLLESFPKDMPSREGFTLISDHFSAGELAPVKVIVDTKGKELPIKEELEKFSFVNTVKDPKEGKENKQIQMYEVSLAENPYSIEALDQIPKLKNSVEKVFKDAGISNAEDQLWIGGETASLYDTKQITERDEAVIIPVMISIIALLLLVYLRSIVAMIYLIVTVVLSFFSALGAGWLLLHYGMGAPAIQGAIPLYAFVFLVALGEDYNIFMVSEIWKNRKTQNHLDAVKNGVIQTGSVITSAGLILAGTFAVLGTLPIQVLVQFGIVTAIGVLLDTFIVRPLLVPAITVVLGRFAFWPGKLSRKSEEVQKVDA</sequence>
<comment type="function">
    <text evidence="2">Exports the siderophore petrobactin.</text>
</comment>
<comment type="subcellular location">
    <subcellularLocation>
        <location evidence="4">Cell membrane</location>
        <topology evidence="1">Multi-pass membrane protein</topology>
    </subcellularLocation>
</comment>
<comment type="disruption phenotype">
    <text evidence="2">Deletion of the gene abrogates export of intact petrobactin, which accumulates inside the cell. However, growth of the mutants in iron-depleted medium is not affected, and virulence in mice is not attenuated.</text>
</comment>
<comment type="similarity">
    <text evidence="4">Belongs to the resistance-nodulation-cell division (RND) (TC 2.A.6) family. MmpL subfamily.</text>
</comment>
<evidence type="ECO:0000255" key="1"/>
<evidence type="ECO:0000269" key="2">
    <source>
    </source>
</evidence>
<evidence type="ECO:0000303" key="3">
    <source>
    </source>
</evidence>
<evidence type="ECO:0000305" key="4"/>
<evidence type="ECO:0000312" key="5">
    <source>
        <dbReference type="EMBL" id="AAT31524.1"/>
    </source>
</evidence>
<name>APEX_BACAN</name>
<reference key="1">
    <citation type="journal article" date="2009" name="J. Bacteriol.">
        <title>The complete genome sequence of Bacillus anthracis Ames 'Ancestor'.</title>
        <authorList>
            <person name="Ravel J."/>
            <person name="Jiang L."/>
            <person name="Stanley S.T."/>
            <person name="Wilson M.R."/>
            <person name="Decker R.S."/>
            <person name="Read T.D."/>
            <person name="Worsham P."/>
            <person name="Keim P.S."/>
            <person name="Salzberg S.L."/>
            <person name="Fraser-Liggett C.M."/>
            <person name="Rasko D.A."/>
        </authorList>
    </citation>
    <scope>NUCLEOTIDE SEQUENCE [LARGE SCALE GENOMIC DNA]</scope>
    <source>
        <strain>Ames ancestor</strain>
    </source>
</reference>
<reference key="2">
    <citation type="journal article" date="2017" name="MBio">
        <title>Petrobactin is exported from Bacillus anthracis by the RND-type exporter ApeX.</title>
        <authorList>
            <person name="Hagan A.K."/>
            <person name="Tripathi A."/>
            <person name="Berger D."/>
            <person name="Sherman D.H."/>
            <person name="Hanna P.C."/>
        </authorList>
    </citation>
    <scope>FUNCTION AS A TRANSPORTER</scope>
    <scope>DISRUPTION PHENOTYPE</scope>
    <source>
        <strain>Sterne</strain>
    </source>
</reference>
<gene>
    <name evidence="3" type="primary">apeX</name>
    <name evidence="5" type="ordered locus">GBAA_2407</name>
</gene>
<keyword id="KW-1003">Cell membrane</keyword>
<keyword id="KW-0472">Membrane</keyword>
<keyword id="KW-1185">Reference proteome</keyword>
<keyword id="KW-0812">Transmembrane</keyword>
<keyword id="KW-1133">Transmembrane helix</keyword>
<keyword id="KW-0813">Transport</keyword>
<protein>
    <recommendedName>
        <fullName evidence="3">Apo-petrobactin exporter</fullName>
    </recommendedName>
</protein>
<organism>
    <name type="scientific">Bacillus anthracis</name>
    <dbReference type="NCBI Taxonomy" id="1392"/>
    <lineage>
        <taxon>Bacteria</taxon>
        <taxon>Bacillati</taxon>
        <taxon>Bacillota</taxon>
        <taxon>Bacilli</taxon>
        <taxon>Bacillales</taxon>
        <taxon>Bacillaceae</taxon>
        <taxon>Bacillus</taxon>
        <taxon>Bacillus cereus group</taxon>
    </lineage>
</organism>
<proteinExistence type="evidence at protein level"/>
<dbReference type="EMBL" id="AE017334">
    <property type="protein sequence ID" value="AAT31524.1"/>
    <property type="molecule type" value="Genomic_DNA"/>
</dbReference>
<dbReference type="RefSeq" id="WP_000716545.1">
    <property type="nucleotide sequence ID" value="NZ_WXXJ01000001.1"/>
</dbReference>
<dbReference type="SMR" id="Q81QL7"/>
<dbReference type="IntAct" id="Q81QL7">
    <property type="interactions" value="1"/>
</dbReference>
<dbReference type="STRING" id="261594.GBAA_2407"/>
<dbReference type="DNASU" id="1087353"/>
<dbReference type="GeneID" id="45022283"/>
<dbReference type="KEGG" id="bar:GBAA_2407"/>
<dbReference type="PATRIC" id="fig|1392.230.peg.2369"/>
<dbReference type="HOGENOM" id="CLU_005108_4_0_9"/>
<dbReference type="OMA" id="TMDYSIF"/>
<dbReference type="OrthoDB" id="2365435at2"/>
<dbReference type="Proteomes" id="UP000000594">
    <property type="component" value="Chromosome"/>
</dbReference>
<dbReference type="GO" id="GO:0005886">
    <property type="term" value="C:plasma membrane"/>
    <property type="evidence" value="ECO:0007669"/>
    <property type="project" value="UniProtKB-SubCell"/>
</dbReference>
<dbReference type="FunFam" id="1.20.1640.10:FF:000057">
    <property type="entry name" value="MMPL domain-containing drug exporter"/>
    <property type="match status" value="1"/>
</dbReference>
<dbReference type="Gene3D" id="1.20.1640.10">
    <property type="entry name" value="Multidrug efflux transporter AcrB transmembrane domain"/>
    <property type="match status" value="2"/>
</dbReference>
<dbReference type="InterPro" id="IPR004869">
    <property type="entry name" value="MMPL_dom"/>
</dbReference>
<dbReference type="InterPro" id="IPR050545">
    <property type="entry name" value="Mycobact_MmpL"/>
</dbReference>
<dbReference type="InterPro" id="IPR000731">
    <property type="entry name" value="SSD"/>
</dbReference>
<dbReference type="PANTHER" id="PTHR33406">
    <property type="entry name" value="MEMBRANE PROTEIN MJ1562-RELATED"/>
    <property type="match status" value="1"/>
</dbReference>
<dbReference type="PANTHER" id="PTHR33406:SF6">
    <property type="entry name" value="MEMBRANE PROTEIN YDGH-RELATED"/>
    <property type="match status" value="1"/>
</dbReference>
<dbReference type="Pfam" id="PF03176">
    <property type="entry name" value="MMPL"/>
    <property type="match status" value="2"/>
</dbReference>
<dbReference type="SUPFAM" id="SSF82866">
    <property type="entry name" value="Multidrug efflux transporter AcrB transmembrane domain"/>
    <property type="match status" value="2"/>
</dbReference>
<dbReference type="PROSITE" id="PS50156">
    <property type="entry name" value="SSD"/>
    <property type="match status" value="2"/>
</dbReference>
<accession>Q81QL7</accession>
<accession>E9RB10</accession>
<accession>E9RB11</accession>
<accession>Q6HYT4</accession>
<accession>Q6KST8</accession>
<feature type="chain" id="PRO_0000443812" description="Apo-petrobactin exporter">
    <location>
        <begin position="1"/>
        <end position="743"/>
    </location>
</feature>
<feature type="transmembrane region" description="Helical" evidence="1">
    <location>
        <begin position="20"/>
        <end position="40"/>
    </location>
</feature>
<feature type="transmembrane region" description="Helical" evidence="1">
    <location>
        <begin position="199"/>
        <end position="219"/>
    </location>
</feature>
<feature type="transmembrane region" description="Helical" evidence="1">
    <location>
        <begin position="223"/>
        <end position="243"/>
    </location>
</feature>
<feature type="transmembrane region" description="Helical" evidence="1">
    <location>
        <begin position="258"/>
        <end position="278"/>
    </location>
</feature>
<feature type="transmembrane region" description="Helical" evidence="1">
    <location>
        <begin position="303"/>
        <end position="323"/>
    </location>
</feature>
<feature type="transmembrane region" description="Helical" evidence="1">
    <location>
        <begin position="337"/>
        <end position="357"/>
    </location>
</feature>
<feature type="transmembrane region" description="Helical" evidence="1">
    <location>
        <begin position="406"/>
        <end position="426"/>
    </location>
</feature>
<feature type="transmembrane region" description="Helical" evidence="1">
    <location>
        <begin position="561"/>
        <end position="581"/>
    </location>
</feature>
<feature type="transmembrane region" description="Helical" evidence="1">
    <location>
        <begin position="584"/>
        <end position="604"/>
    </location>
</feature>
<feature type="transmembrane region" description="Helical" evidence="1">
    <location>
        <begin position="613"/>
        <end position="633"/>
    </location>
</feature>
<feature type="transmembrane region" description="Helical" evidence="1">
    <location>
        <begin position="672"/>
        <end position="692"/>
    </location>
</feature>
<feature type="transmembrane region" description="Helical" evidence="1">
    <location>
        <begin position="694"/>
        <end position="714"/>
    </location>
</feature>